<accession>P45514</accession>
<organism>
    <name type="scientific">Citrobacter freundii</name>
    <dbReference type="NCBI Taxonomy" id="546"/>
    <lineage>
        <taxon>Bacteria</taxon>
        <taxon>Pseudomonadati</taxon>
        <taxon>Pseudomonadota</taxon>
        <taxon>Gammaproteobacteria</taxon>
        <taxon>Enterobacterales</taxon>
        <taxon>Enterobacteriaceae</taxon>
        <taxon>Citrobacter</taxon>
        <taxon>Citrobacter freundii complex</taxon>
    </lineage>
</organism>
<comment type="catalytic activity">
    <reaction>
        <text>glycerol = 3-hydroxypropanal + H2O</text>
        <dbReference type="Rhea" id="RHEA:19765"/>
        <dbReference type="ChEBI" id="CHEBI:15377"/>
        <dbReference type="ChEBI" id="CHEBI:17754"/>
        <dbReference type="ChEBI" id="CHEBI:17871"/>
        <dbReference type="EC" id="4.2.1.30"/>
    </reaction>
</comment>
<comment type="cofactor">
    <cofactor>
        <name>adenosylcob(III)alamin</name>
        <dbReference type="ChEBI" id="CHEBI:18408"/>
    </cofactor>
</comment>
<comment type="subunit">
    <text>Probably consists of three subunits: large, medium, and small.</text>
</comment>
<comment type="similarity">
    <text evidence="1">Belongs to the diol/glycerol dehydratase large subunit family.</text>
</comment>
<reference key="1">
    <citation type="journal article" date="1996" name="J. Bacteriol.">
        <title>Cloning, sequencing, and overexpression of the genes encoding coenzyme B12-dependent glycerol dehydratase of Citrobacter freundii.</title>
        <authorList>
            <person name="Seyfried M."/>
            <person name="Daniel R."/>
            <person name="Gottschalk G."/>
        </authorList>
    </citation>
    <scope>NUCLEOTIDE SEQUENCE [GENOMIC DNA]</scope>
    <scope>PARTIAL PROTEIN SEQUENCE</scope>
    <source>
        <strain>ATCC 6750 / DSM 30040 / NCIB 8173 / M8BK</strain>
    </source>
</reference>
<gene>
    <name type="primary">dhaB</name>
</gene>
<name>DHAB_CITFR</name>
<proteinExistence type="evidence at protein level"/>
<keyword id="KW-0846">Cobalamin</keyword>
<keyword id="KW-0170">Cobalt</keyword>
<keyword id="KW-0903">Direct protein sequencing</keyword>
<keyword id="KW-0319">Glycerol metabolism</keyword>
<keyword id="KW-0456">Lyase</keyword>
<dbReference type="EC" id="4.2.1.30"/>
<dbReference type="EMBL" id="U09771">
    <property type="protein sequence ID" value="AAB48850.1"/>
    <property type="molecule type" value="Genomic_DNA"/>
</dbReference>
<dbReference type="SMR" id="P45514"/>
<dbReference type="STRING" id="1333848.CFNIH1_02610"/>
<dbReference type="BioCyc" id="MetaCyc:MONOMER-4485"/>
<dbReference type="GO" id="GO:0031419">
    <property type="term" value="F:cobalamin binding"/>
    <property type="evidence" value="ECO:0007669"/>
    <property type="project" value="UniProtKB-KW"/>
</dbReference>
<dbReference type="GO" id="GO:0046405">
    <property type="term" value="F:glycerol dehydratase activity"/>
    <property type="evidence" value="ECO:0007669"/>
    <property type="project" value="UniProtKB-EC"/>
</dbReference>
<dbReference type="GO" id="GO:0006071">
    <property type="term" value="P:glycerol metabolic process"/>
    <property type="evidence" value="ECO:0007669"/>
    <property type="project" value="UniProtKB-KW"/>
</dbReference>
<dbReference type="CDD" id="cd03687">
    <property type="entry name" value="Dehydratase_LU"/>
    <property type="match status" value="1"/>
</dbReference>
<dbReference type="Gene3D" id="3.20.20.350">
    <property type="entry name" value="Diol/glycerol dehydratase, large subunit"/>
    <property type="match status" value="1"/>
</dbReference>
<dbReference type="InterPro" id="IPR016176">
    <property type="entry name" value="Cbl-dep_enz_cat"/>
</dbReference>
<dbReference type="InterPro" id="IPR036999">
    <property type="entry name" value="Diol/glycerol_deHase_lsu_sf"/>
</dbReference>
<dbReference type="InterPro" id="IPR003206">
    <property type="entry name" value="Diol/glycerol_deHydtase_lsu"/>
</dbReference>
<dbReference type="NCBIfam" id="NF011979">
    <property type="entry name" value="PRK15444.1"/>
    <property type="match status" value="1"/>
</dbReference>
<dbReference type="Pfam" id="PF02286">
    <property type="entry name" value="Dehydratase_LU"/>
    <property type="match status" value="1"/>
</dbReference>
<dbReference type="PIRSF" id="PIRSF018507">
    <property type="entry name" value="Prpndl_dhdrts_lg"/>
    <property type="match status" value="1"/>
</dbReference>
<dbReference type="SUPFAM" id="SSF51703">
    <property type="entry name" value="Cobalamin (vitamin B12)-dependent enzymes"/>
    <property type="match status" value="1"/>
</dbReference>
<protein>
    <recommendedName>
        <fullName>Glycerol dehydratase large subunit</fullName>
        <ecNumber>4.2.1.30</ecNumber>
    </recommendedName>
</protein>
<evidence type="ECO:0000305" key="1"/>
<feature type="chain" id="PRO_0000079884" description="Glycerol dehydratase large subunit">
    <location>
        <begin position="1"/>
        <end position="555"/>
    </location>
</feature>
<sequence length="555" mass="60472">MRRSKRFEVLAQRPVNQDGLIGEWPEEGLIAMESPYDPASSVKVENGRIVELDGKSRAEFDMIDRFIADYAINVPEAERAMQLDALEIARMLVDIHVSREEIIAITTAITPAKRLEVMAQMNVVEMMMALQKMRARRTPSNQCHVTNLKDNPVQIAADAAEAGIRGFSEQETTVGIARYAPFNALALLVGSQCGAPGVLTQCSVEEATELELGMRGLTSYAETVSVYGTESVFTDGDDTPWSKAFLASAYASRGLKMRYTSGTGSEALMGYSESKSMLYLESRCIFITKGAGVQGLQNGAVSCIGMTGAVPSGIRAVLAENLIASMLDLEVASANDQTFSHSDIRRTARTLMQMLPGTDFIFSGYSAVPNYDNMFAGSNFDAEDFDDYNILQRDLMVDGGLRPVTEEETIAIRNKAARAIQAVFRELGLPLISDEEVDAATYAHGSKDMPARNVVEDLAAVEEMMKRNITGLDIVGALSSSGFEDIASNILNMLRQRVTGDYLQTSAILDRQFDVVSAVNDINDYQGPGTGYRISAERWAEIKNIAGVVQPGSIE</sequence>